<keyword id="KW-0175">Coiled coil</keyword>
<keyword id="KW-0963">Cytoplasm</keyword>
<keyword id="KW-1185">Reference proteome</keyword>
<sequence>MSKVNSEESSSSQKLLKEVEKISEALYVNKNPRGSVAGSNKTPTKPLSRSNLAEPKEKKSFWNWPLRAINHVRNRRFNCCFSAQVHSIEGLPPIFQDLSLTVHWKRRDESLSTRPAKVSNGRAEFKDKLTHTCSVYGSRSGPHHSAKYEAKHFLLYVSLVGSPEIDLGKHRMDLTKLLPLTLEELQDEKSSGKWSTTFQLSGKANGATLSMSFGYTVVGDTRNPASSGSTQNFRSSSNVKQTSNNTGLTRAISAKSSLGNGKSASRRYDHSIVNRESHPLSQNMEEIKDLHEILPAVQSDLGSSVNTLYQKFDEEKVDPANESQFEFDVVTKHIEPVESISHEKEDANALQSELVTGNETVVPFEEIKKAGEVPTAGSDEVGAENFPLEEPLVNGNETDVPFELLKKAGEVPTAGRDEVGTEILPPEEPLVNGNETDVPFEELMITGEASIARSEEAVEIVTEELAPEEGNKISPKNEESVVPKDAEEVMNGEKDLKEMIMKDLESALKSVEMLEATASEDEEDRKKHGDKDKYFITPMKETVPSCSRDVAESVACEFLDMLGIEHSPFGLSSESEPESPRERLLREFEMETLAAGSLFDFSIEGDDPQLECDENFPNEYESDFEEGFDLASLVHDIEEEYQLEAQARVSHPRAKMLEGLETESLMREWGMNENTFQNSPPHNGRDAFHPADFPVKEPFDLPPLGDGLGPVVQTKNGGFLRSMNPLLFRNSKAGGSLIMQVSTPVVVPAEMGSGIMEILQKLATAGIEKLSMQANKVMPLDDITGKTMEEVLWETSPTIDIGDRDHVSERESGDASGFVRGGERRTSFAAKPKKFGSSSGNNNFDSEYVSLEDLAPLAMDQIEALSLEGLRIQSGMSDEDAPSDITAQSIGDISAFQGKSGCVGLEGAAGLQLLDIKDDGDDDDDGLMGLSLTLDEWMKLDSGDIGDEDEINERTSKILAAHHANPLNFIRKGSKGEKRKGKKGRKCGLLGNTFTVALMVQLRDPLRNYEPVGAPMLSLIQVERLFVPPKPKIYSTVSELKKTDEEEEADASDAKKEEKPMEEQGIPQYKITEVHLTGMKSETDKKPWGITTQQQQVQSGSRWLMANGMGKGNNKLPLMKPKLGSAKPGDKLWSVSGSGSKWKELGKMGKSNTHIRNPNVIMPK</sequence>
<reference key="1">
    <citation type="journal article" date="2000" name="Nature">
        <title>Sequence and analysis of chromosome 5 of the plant Arabidopsis thaliana.</title>
        <authorList>
            <person name="Tabata S."/>
            <person name="Kaneko T."/>
            <person name="Nakamura Y."/>
            <person name="Kotani H."/>
            <person name="Kato T."/>
            <person name="Asamizu E."/>
            <person name="Miyajima N."/>
            <person name="Sasamoto S."/>
            <person name="Kimura T."/>
            <person name="Hosouchi T."/>
            <person name="Kawashima K."/>
            <person name="Kohara M."/>
            <person name="Matsumoto M."/>
            <person name="Matsuno A."/>
            <person name="Muraki A."/>
            <person name="Nakayama S."/>
            <person name="Nakazaki N."/>
            <person name="Naruo K."/>
            <person name="Okumura S."/>
            <person name="Shinpo S."/>
            <person name="Takeuchi C."/>
            <person name="Wada T."/>
            <person name="Watanabe A."/>
            <person name="Yamada M."/>
            <person name="Yasuda M."/>
            <person name="Sato S."/>
            <person name="de la Bastide M."/>
            <person name="Huang E."/>
            <person name="Spiegel L."/>
            <person name="Gnoj L."/>
            <person name="O'Shaughnessy A."/>
            <person name="Preston R."/>
            <person name="Habermann K."/>
            <person name="Murray J."/>
            <person name="Johnson D."/>
            <person name="Rohlfing T."/>
            <person name="Nelson J."/>
            <person name="Stoneking T."/>
            <person name="Pepin K."/>
            <person name="Spieth J."/>
            <person name="Sekhon M."/>
            <person name="Armstrong J."/>
            <person name="Becker M."/>
            <person name="Belter E."/>
            <person name="Cordum H."/>
            <person name="Cordes M."/>
            <person name="Courtney L."/>
            <person name="Courtney W."/>
            <person name="Dante M."/>
            <person name="Du H."/>
            <person name="Edwards J."/>
            <person name="Fryman J."/>
            <person name="Haakensen B."/>
            <person name="Lamar E."/>
            <person name="Latreille P."/>
            <person name="Leonard S."/>
            <person name="Meyer R."/>
            <person name="Mulvaney E."/>
            <person name="Ozersky P."/>
            <person name="Riley A."/>
            <person name="Strowmatt C."/>
            <person name="Wagner-McPherson C."/>
            <person name="Wollam A."/>
            <person name="Yoakum M."/>
            <person name="Bell M."/>
            <person name="Dedhia N."/>
            <person name="Parnell L."/>
            <person name="Shah R."/>
            <person name="Rodriguez M."/>
            <person name="Hoon See L."/>
            <person name="Vil D."/>
            <person name="Baker J."/>
            <person name="Kirchoff K."/>
            <person name="Toth K."/>
            <person name="King L."/>
            <person name="Bahret A."/>
            <person name="Miller B."/>
            <person name="Marra M.A."/>
            <person name="Martienssen R."/>
            <person name="McCombie W.R."/>
            <person name="Wilson R.K."/>
            <person name="Murphy G."/>
            <person name="Bancroft I."/>
            <person name="Volckaert G."/>
            <person name="Wambutt R."/>
            <person name="Duesterhoeft A."/>
            <person name="Stiekema W."/>
            <person name="Pohl T."/>
            <person name="Entian K.-D."/>
            <person name="Terryn N."/>
            <person name="Hartley N."/>
            <person name="Bent E."/>
            <person name="Johnson S."/>
            <person name="Langham S.-A."/>
            <person name="McCullagh B."/>
            <person name="Robben J."/>
            <person name="Grymonprez B."/>
            <person name="Zimmermann W."/>
            <person name="Ramsperger U."/>
            <person name="Wedler H."/>
            <person name="Balke K."/>
            <person name="Wedler E."/>
            <person name="Peters S."/>
            <person name="van Staveren M."/>
            <person name="Dirkse W."/>
            <person name="Mooijman P."/>
            <person name="Klein Lankhorst R."/>
            <person name="Weitzenegger T."/>
            <person name="Bothe G."/>
            <person name="Rose M."/>
            <person name="Hauf J."/>
            <person name="Berneiser S."/>
            <person name="Hempel S."/>
            <person name="Feldpausch M."/>
            <person name="Lamberth S."/>
            <person name="Villarroel R."/>
            <person name="Gielen J."/>
            <person name="Ardiles W."/>
            <person name="Bents O."/>
            <person name="Lemcke K."/>
            <person name="Kolesov G."/>
            <person name="Mayer K.F.X."/>
            <person name="Rudd S."/>
            <person name="Schoof H."/>
            <person name="Schueller C."/>
            <person name="Zaccaria P."/>
            <person name="Mewes H.-W."/>
            <person name="Bevan M."/>
            <person name="Fransz P.F."/>
        </authorList>
    </citation>
    <scope>NUCLEOTIDE SEQUENCE [LARGE SCALE GENOMIC DNA]</scope>
    <source>
        <strain>cv. Columbia</strain>
    </source>
</reference>
<reference key="2">
    <citation type="journal article" date="2017" name="Plant J.">
        <title>Araport11: a complete reannotation of the Arabidopsis thaliana reference genome.</title>
        <authorList>
            <person name="Cheng C.Y."/>
            <person name="Krishnakumar V."/>
            <person name="Chan A.P."/>
            <person name="Thibaud-Nissen F."/>
            <person name="Schobel S."/>
            <person name="Town C.D."/>
        </authorList>
    </citation>
    <scope>GENOME REANNOTATION</scope>
    <source>
        <strain>cv. Columbia</strain>
    </source>
</reference>
<reference key="3">
    <citation type="submission" date="2006-07" db="EMBL/GenBank/DDBJ databases">
        <title>Large-scale analysis of RIKEN Arabidopsis full-length (RAFL) cDNAs.</title>
        <authorList>
            <person name="Totoki Y."/>
            <person name="Seki M."/>
            <person name="Ishida J."/>
            <person name="Nakajima M."/>
            <person name="Enju A."/>
            <person name="Kamiya A."/>
            <person name="Narusaka M."/>
            <person name="Shin-i T."/>
            <person name="Nakagawa M."/>
            <person name="Sakamoto N."/>
            <person name="Oishi K."/>
            <person name="Kohara Y."/>
            <person name="Kobayashi M."/>
            <person name="Toyoda A."/>
            <person name="Sakaki Y."/>
            <person name="Sakurai T."/>
            <person name="Iida K."/>
            <person name="Akiyama K."/>
            <person name="Satou M."/>
            <person name="Toyoda T."/>
            <person name="Konagaya A."/>
            <person name="Carninci P."/>
            <person name="Kawai J."/>
            <person name="Hayashizaki Y."/>
            <person name="Shinozaki K."/>
        </authorList>
    </citation>
    <scope>NUCLEOTIDE SEQUENCE [LARGE SCALE MRNA] OF 371-1164</scope>
    <source>
        <strain>cv. Columbia</strain>
    </source>
</reference>
<reference key="4">
    <citation type="journal article" date="2003" name="Science">
        <title>Empirical analysis of transcriptional activity in the Arabidopsis genome.</title>
        <authorList>
            <person name="Yamada K."/>
            <person name="Lim J."/>
            <person name="Dale J.M."/>
            <person name="Chen H."/>
            <person name="Shinn P."/>
            <person name="Palm C.J."/>
            <person name="Southwick A.M."/>
            <person name="Wu H.C."/>
            <person name="Kim C.J."/>
            <person name="Nguyen M."/>
            <person name="Pham P.K."/>
            <person name="Cheuk R.F."/>
            <person name="Karlin-Newmann G."/>
            <person name="Liu S.X."/>
            <person name="Lam B."/>
            <person name="Sakano H."/>
            <person name="Wu T."/>
            <person name="Yu G."/>
            <person name="Miranda M."/>
            <person name="Quach H.L."/>
            <person name="Tripp M."/>
            <person name="Chang C.H."/>
            <person name="Lee J.M."/>
            <person name="Toriumi M.J."/>
            <person name="Chan M.M."/>
            <person name="Tang C.C."/>
            <person name="Onodera C.S."/>
            <person name="Deng J.M."/>
            <person name="Akiyama K."/>
            <person name="Ansari Y."/>
            <person name="Arakawa T."/>
            <person name="Banh J."/>
            <person name="Banno F."/>
            <person name="Bowser L."/>
            <person name="Brooks S.Y."/>
            <person name="Carninci P."/>
            <person name="Chao Q."/>
            <person name="Choy N."/>
            <person name="Enju A."/>
            <person name="Goldsmith A.D."/>
            <person name="Gurjal M."/>
            <person name="Hansen N.F."/>
            <person name="Hayashizaki Y."/>
            <person name="Johnson-Hopson C."/>
            <person name="Hsuan V.W."/>
            <person name="Iida K."/>
            <person name="Karnes M."/>
            <person name="Khan S."/>
            <person name="Koesema E."/>
            <person name="Ishida J."/>
            <person name="Jiang P.X."/>
            <person name="Jones T."/>
            <person name="Kawai J."/>
            <person name="Kamiya A."/>
            <person name="Meyers C."/>
            <person name="Nakajima M."/>
            <person name="Narusaka M."/>
            <person name="Seki M."/>
            <person name="Sakurai T."/>
            <person name="Satou M."/>
            <person name="Tamse R."/>
            <person name="Vaysberg M."/>
            <person name="Wallender E.K."/>
            <person name="Wong C."/>
            <person name="Yamamura Y."/>
            <person name="Yuan S."/>
            <person name="Shinozaki K."/>
            <person name="Davis R.W."/>
            <person name="Theologis A."/>
            <person name="Ecker J.R."/>
        </authorList>
    </citation>
    <scope>NUCLEOTIDE SEQUENCE [LARGE SCALE MRNA] OF 701-1164</scope>
    <source>
        <strain>cv. Columbia</strain>
    </source>
</reference>
<reference key="5">
    <citation type="journal article" date="2015" name="Plant Physiol.">
        <title>PLASTID MOVEMENT IMPAIRED1 and PLASTID MOVEMENT IMPAIRED1-RELATED1 mediate photorelocation movements of both chloroplasts and nuclei.</title>
        <authorList>
            <person name="Suetsugu N."/>
            <person name="Higa T."/>
            <person name="Kong S.-G."/>
            <person name="Wada M."/>
        </authorList>
    </citation>
    <scope>FUNCTION</scope>
    <scope>DISRUPTION PHENOTYPE</scope>
    <source>
        <strain>cv. Columbia GL1</strain>
    </source>
</reference>
<name>PMIR1_ARATH</name>
<organism evidence="9">
    <name type="scientific">Arabidopsis thaliana</name>
    <name type="common">Mouse-ear cress</name>
    <dbReference type="NCBI Taxonomy" id="3702"/>
    <lineage>
        <taxon>Eukaryota</taxon>
        <taxon>Viridiplantae</taxon>
        <taxon>Streptophyta</taxon>
        <taxon>Embryophyta</taxon>
        <taxon>Tracheophyta</taxon>
        <taxon>Spermatophyta</taxon>
        <taxon>Magnoliopsida</taxon>
        <taxon>eudicotyledons</taxon>
        <taxon>Gunneridae</taxon>
        <taxon>Pentapetalae</taxon>
        <taxon>rosids</taxon>
        <taxon>malvids</taxon>
        <taxon>Brassicales</taxon>
        <taxon>Brassicaceae</taxon>
        <taxon>Camelineae</taxon>
        <taxon>Arabidopsis</taxon>
    </lineage>
</organism>
<protein>
    <recommendedName>
        <fullName evidence="4">Protein PLASTID MOVEMENT IMPAIRED 1-RELATED 1</fullName>
    </recommendedName>
</protein>
<feature type="chain" id="PRO_0000435991" description="Protein PLASTID MOVEMENT IMPAIRED 1-RELATED 1">
    <location>
        <begin position="1"/>
        <end position="1164"/>
    </location>
</feature>
<feature type="domain" description="C2 NT-type" evidence="1">
    <location>
        <begin position="69"/>
        <end position="217"/>
    </location>
</feature>
<feature type="region of interest" description="Disordered" evidence="2">
    <location>
        <begin position="30"/>
        <end position="54"/>
    </location>
</feature>
<feature type="region of interest" description="Disordered" evidence="2">
    <location>
        <begin position="224"/>
        <end position="268"/>
    </location>
</feature>
<feature type="region of interest" description="Disordered" evidence="2">
    <location>
        <begin position="466"/>
        <end position="486"/>
    </location>
</feature>
<feature type="region of interest" description="Disordered" evidence="2">
    <location>
        <begin position="1038"/>
        <end position="1063"/>
    </location>
</feature>
<feature type="region of interest" description="Disordered" evidence="2">
    <location>
        <begin position="1124"/>
        <end position="1164"/>
    </location>
</feature>
<feature type="compositionally biased region" description="Polar residues" evidence="2">
    <location>
        <begin position="37"/>
        <end position="51"/>
    </location>
</feature>
<feature type="compositionally biased region" description="Polar residues" evidence="2">
    <location>
        <begin position="224"/>
        <end position="263"/>
    </location>
</feature>
<feature type="compositionally biased region" description="Basic and acidic residues" evidence="2">
    <location>
        <begin position="469"/>
        <end position="486"/>
    </location>
</feature>
<feature type="compositionally biased region" description="Basic and acidic residues" evidence="2">
    <location>
        <begin position="1052"/>
        <end position="1062"/>
    </location>
</feature>
<feature type="sequence conflict" description="In Ref. 4; AAO42220." evidence="5" ref="4">
    <original>P</original>
    <variation>S</variation>
    <location>
        <position position="832"/>
    </location>
</feature>
<feature type="sequence conflict" description="In Ref. 3; BAF02019." evidence="5" ref="3">
    <original>N</original>
    <variation>S</variation>
    <location>
        <position position="1107"/>
    </location>
</feature>
<dbReference type="EMBL" id="AF296832">
    <property type="status" value="NOT_ANNOTATED_CDS"/>
    <property type="molecule type" value="Genomic_DNA"/>
</dbReference>
<dbReference type="EMBL" id="CP002688">
    <property type="protein sequence ID" value="AED92866.1"/>
    <property type="molecule type" value="Genomic_DNA"/>
</dbReference>
<dbReference type="EMBL" id="AK230211">
    <property type="protein sequence ID" value="BAF02019.1"/>
    <property type="molecule type" value="mRNA"/>
</dbReference>
<dbReference type="EMBL" id="BT004202">
    <property type="protein sequence ID" value="AAO42220.1"/>
    <property type="molecule type" value="mRNA"/>
</dbReference>
<dbReference type="RefSeq" id="NP_197561.1">
    <property type="nucleotide sequence ID" value="NM_122068.3"/>
</dbReference>
<dbReference type="FunCoup" id="F4K5K6">
    <property type="interactions" value="1707"/>
</dbReference>
<dbReference type="STRING" id="3702.F4K5K6"/>
<dbReference type="GlyGen" id="F4K5K6">
    <property type="glycosylation" value="2 sites"/>
</dbReference>
<dbReference type="iPTMnet" id="F4K5K6"/>
<dbReference type="PaxDb" id="3702-AT5G20610.1"/>
<dbReference type="ProteomicsDB" id="226192"/>
<dbReference type="EnsemblPlants" id="AT5G20610.1">
    <property type="protein sequence ID" value="AT5G20610.1"/>
    <property type="gene ID" value="AT5G20610"/>
</dbReference>
<dbReference type="GeneID" id="832183"/>
<dbReference type="Gramene" id="AT5G20610.1">
    <property type="protein sequence ID" value="AT5G20610.1"/>
    <property type="gene ID" value="AT5G20610"/>
</dbReference>
<dbReference type="KEGG" id="ath:AT5G20610"/>
<dbReference type="Araport" id="AT5G20610"/>
<dbReference type="TAIR" id="AT5G20610">
    <property type="gene designation" value="PMIR1"/>
</dbReference>
<dbReference type="eggNOG" id="ENOG502QW28">
    <property type="taxonomic scope" value="Eukaryota"/>
</dbReference>
<dbReference type="HOGENOM" id="CLU_003931_0_0_1"/>
<dbReference type="InParanoid" id="F4K5K6"/>
<dbReference type="OMA" id="KSFWNWP"/>
<dbReference type="OrthoDB" id="2019483at2759"/>
<dbReference type="PRO" id="PR:F4K5K6"/>
<dbReference type="Proteomes" id="UP000006548">
    <property type="component" value="Chromosome 5"/>
</dbReference>
<dbReference type="ExpressionAtlas" id="F4K5K6">
    <property type="expression patterns" value="baseline and differential"/>
</dbReference>
<dbReference type="GO" id="GO:0005737">
    <property type="term" value="C:cytoplasm"/>
    <property type="evidence" value="ECO:0007669"/>
    <property type="project" value="UniProtKB-SubCell"/>
</dbReference>
<dbReference type="GO" id="GO:0030048">
    <property type="term" value="P:actin filament-based movement"/>
    <property type="evidence" value="ECO:0000315"/>
    <property type="project" value="UniProtKB"/>
</dbReference>
<dbReference type="GO" id="GO:0009903">
    <property type="term" value="P:chloroplast avoidance movement"/>
    <property type="evidence" value="ECO:0000315"/>
    <property type="project" value="UniProtKB"/>
</dbReference>
<dbReference type="GO" id="GO:0009902">
    <property type="term" value="P:chloroplast relocation"/>
    <property type="evidence" value="ECO:0000315"/>
    <property type="project" value="UniProtKB"/>
</dbReference>
<dbReference type="GO" id="GO:0031022">
    <property type="term" value="P:nuclear migration along microfilament"/>
    <property type="evidence" value="ECO:0000315"/>
    <property type="project" value="UniProtKB"/>
</dbReference>
<dbReference type="GO" id="GO:0009637">
    <property type="term" value="P:response to blue light"/>
    <property type="evidence" value="ECO:0000315"/>
    <property type="project" value="UniProtKB"/>
</dbReference>
<dbReference type="InterPro" id="IPR019448">
    <property type="entry name" value="NT-C2"/>
</dbReference>
<dbReference type="InterPro" id="IPR039614">
    <property type="entry name" value="PMI1-like"/>
</dbReference>
<dbReference type="InterPro" id="IPR048972">
    <property type="entry name" value="PMI1_PMIR1-2_C"/>
</dbReference>
<dbReference type="PANTHER" id="PTHR33414">
    <property type="entry name" value="PROTEIN PLASTID MOVEMENT IMPAIRED 1-RELATED 1"/>
    <property type="match status" value="1"/>
</dbReference>
<dbReference type="PANTHER" id="PTHR33414:SF1">
    <property type="entry name" value="PROTEIN PLASTID MOVEMENT IMPAIRED 1-RELATED 1"/>
    <property type="match status" value="1"/>
</dbReference>
<dbReference type="Pfam" id="PF10358">
    <property type="entry name" value="NT-C2"/>
    <property type="match status" value="1"/>
</dbReference>
<dbReference type="Pfam" id="PF21745">
    <property type="entry name" value="PMI1_PMIR1-2_C"/>
    <property type="match status" value="1"/>
</dbReference>
<dbReference type="PROSITE" id="PS51840">
    <property type="entry name" value="C2_NT"/>
    <property type="match status" value="1"/>
</dbReference>
<gene>
    <name evidence="4" type="primary">PMIR1</name>
    <name evidence="7" type="ordered locus">At5g20610</name>
    <name evidence="8" type="ORF">T1M15</name>
</gene>
<proteinExistence type="evidence at transcript level"/>
<accession>F4K5K6</accession>
<accession>Q0WLI8</accession>
<accession>Q84W59</accession>
<comment type="function">
    <text evidence="3">Together with PMI1, necessary for chloroplast and nuclear photorelocation movements via the regulation of chloroplast-actin (cp-actin) filaments in pavement cells.</text>
</comment>
<comment type="subcellular location">
    <subcellularLocation>
        <location evidence="6">Cytoplasm</location>
    </subcellularLocation>
</comment>
<comment type="disruption phenotype">
    <text evidence="3">Severe defects in both chloroplast and nuclear photorelocation movements resulting from the impaired regulation of chloroplast-actin filaments.</text>
</comment>
<evidence type="ECO:0000255" key="1">
    <source>
        <dbReference type="PROSITE-ProRule" id="PRU01186"/>
    </source>
</evidence>
<evidence type="ECO:0000256" key="2">
    <source>
        <dbReference type="SAM" id="MobiDB-lite"/>
    </source>
</evidence>
<evidence type="ECO:0000269" key="3">
    <source>
    </source>
</evidence>
<evidence type="ECO:0000303" key="4">
    <source>
    </source>
</evidence>
<evidence type="ECO:0000305" key="5"/>
<evidence type="ECO:0000305" key="6">
    <source>
    </source>
</evidence>
<evidence type="ECO:0000312" key="7">
    <source>
        <dbReference type="Araport" id="AT5G20610"/>
    </source>
</evidence>
<evidence type="ECO:0000312" key="8">
    <source>
        <dbReference type="EMBL" id="AF296832"/>
    </source>
</evidence>
<evidence type="ECO:0000312" key="9">
    <source>
        <dbReference type="Proteomes" id="UP000006548"/>
    </source>
</evidence>